<name>PSTB_METJA</name>
<comment type="function">
    <text evidence="1">Part of the ABC transporter complex PstSACB involved in phosphate import. Responsible for energy coupling to the transport system.</text>
</comment>
<comment type="catalytic activity">
    <reaction evidence="1">
        <text>phosphate(out) + ATP + H2O = ADP + 2 phosphate(in) + H(+)</text>
        <dbReference type="Rhea" id="RHEA:24440"/>
        <dbReference type="ChEBI" id="CHEBI:15377"/>
        <dbReference type="ChEBI" id="CHEBI:15378"/>
        <dbReference type="ChEBI" id="CHEBI:30616"/>
        <dbReference type="ChEBI" id="CHEBI:43474"/>
        <dbReference type="ChEBI" id="CHEBI:456216"/>
        <dbReference type="EC" id="7.3.2.1"/>
    </reaction>
</comment>
<comment type="subunit">
    <text evidence="1">The complex is composed of two ATP-binding proteins (PstB), two transmembrane proteins (PstC and PstA) and a solute-binding protein (PstS).</text>
</comment>
<comment type="subcellular location">
    <subcellularLocation>
        <location evidence="1">Cell membrane</location>
        <topology evidence="1">Peripheral membrane protein</topology>
    </subcellularLocation>
</comment>
<comment type="similarity">
    <text evidence="1">Belongs to the ABC transporter superfamily. Phosphate importer (TC 3.A.1.7) family.</text>
</comment>
<proteinExistence type="inferred from homology"/>
<reference key="1">
    <citation type="journal article" date="1996" name="Science">
        <title>Complete genome sequence of the methanogenic archaeon, Methanococcus jannaschii.</title>
        <authorList>
            <person name="Bult C.J."/>
            <person name="White O."/>
            <person name="Olsen G.J."/>
            <person name="Zhou L."/>
            <person name="Fleischmann R.D."/>
            <person name="Sutton G.G."/>
            <person name="Blake J.A."/>
            <person name="FitzGerald L.M."/>
            <person name="Clayton R.A."/>
            <person name="Gocayne J.D."/>
            <person name="Kerlavage A.R."/>
            <person name="Dougherty B.A."/>
            <person name="Tomb J.-F."/>
            <person name="Adams M.D."/>
            <person name="Reich C.I."/>
            <person name="Overbeek R."/>
            <person name="Kirkness E.F."/>
            <person name="Weinstock K.G."/>
            <person name="Merrick J.M."/>
            <person name="Glodek A."/>
            <person name="Scott J.L."/>
            <person name="Geoghagen N.S.M."/>
            <person name="Weidman J.F."/>
            <person name="Fuhrmann J.L."/>
            <person name="Nguyen D."/>
            <person name="Utterback T.R."/>
            <person name="Kelley J.M."/>
            <person name="Peterson J.D."/>
            <person name="Sadow P.W."/>
            <person name="Hanna M.C."/>
            <person name="Cotton M.D."/>
            <person name="Roberts K.M."/>
            <person name="Hurst M.A."/>
            <person name="Kaine B.P."/>
            <person name="Borodovsky M."/>
            <person name="Klenk H.-P."/>
            <person name="Fraser C.M."/>
            <person name="Smith H.O."/>
            <person name="Woese C.R."/>
            <person name="Venter J.C."/>
        </authorList>
    </citation>
    <scope>NUCLEOTIDE SEQUENCE [LARGE SCALE GENOMIC DNA]</scope>
    <source>
        <strain>ATCC 43067 / DSM 2661 / JAL-1 / JCM 10045 / NBRC 100440</strain>
    </source>
</reference>
<gene>
    <name evidence="1" type="primary">pstB</name>
    <name type="ordered locus">MJ1012</name>
</gene>
<sequence length="252" mass="28688">MTKVKMETKNLNLWYGEKQALFDINLPIYENKITALIGPSGCGKSTFLRCLNRLNDLIPNVRIEGEVLLDGKNIYDKDVDVYELRKRVGMVFQKPNPFAMSIYDNVAFGPRIHGIKDKKELDKIVEWALKKAALWDEVKDELHKNALSLSGGQQQRLCIARAIAVKPEVLLMDEPTSALDPISTLKIEELMVELAKDYTIVVVTHNMQQASRVSDYTAFFLMGKLIEFGETEQIFLNPQKKETDDYISGRFG</sequence>
<organism>
    <name type="scientific">Methanocaldococcus jannaschii (strain ATCC 43067 / DSM 2661 / JAL-1 / JCM 10045 / NBRC 100440)</name>
    <name type="common">Methanococcus jannaschii</name>
    <dbReference type="NCBI Taxonomy" id="243232"/>
    <lineage>
        <taxon>Archaea</taxon>
        <taxon>Methanobacteriati</taxon>
        <taxon>Methanobacteriota</taxon>
        <taxon>Methanomada group</taxon>
        <taxon>Methanococci</taxon>
        <taxon>Methanococcales</taxon>
        <taxon>Methanocaldococcaceae</taxon>
        <taxon>Methanocaldococcus</taxon>
    </lineage>
</organism>
<accession>Q58418</accession>
<feature type="chain" id="PRO_0000092946" description="Phosphate import ATP-binding protein PstB">
    <location>
        <begin position="1"/>
        <end position="252"/>
    </location>
</feature>
<feature type="domain" description="ABC transporter" evidence="1">
    <location>
        <begin position="6"/>
        <end position="247"/>
    </location>
</feature>
<feature type="binding site" evidence="1">
    <location>
        <begin position="38"/>
        <end position="45"/>
    </location>
    <ligand>
        <name>ATP</name>
        <dbReference type="ChEBI" id="CHEBI:30616"/>
    </ligand>
</feature>
<dbReference type="EC" id="7.3.2.1" evidence="1"/>
<dbReference type="EMBL" id="L77117">
    <property type="protein sequence ID" value="AAB99016.1"/>
    <property type="molecule type" value="Genomic_DNA"/>
</dbReference>
<dbReference type="PIR" id="C64426">
    <property type="entry name" value="C64426"/>
</dbReference>
<dbReference type="RefSeq" id="WP_010870525.1">
    <property type="nucleotide sequence ID" value="NC_000909.1"/>
</dbReference>
<dbReference type="SMR" id="Q58418"/>
<dbReference type="FunCoup" id="Q58418">
    <property type="interactions" value="43"/>
</dbReference>
<dbReference type="STRING" id="243232.MJ_1012"/>
<dbReference type="PaxDb" id="243232-MJ_1012"/>
<dbReference type="EnsemblBacteria" id="AAB99016">
    <property type="protein sequence ID" value="AAB99016"/>
    <property type="gene ID" value="MJ_1012"/>
</dbReference>
<dbReference type="GeneID" id="1451909"/>
<dbReference type="KEGG" id="mja:MJ_1012"/>
<dbReference type="eggNOG" id="arCOG00231">
    <property type="taxonomic scope" value="Archaea"/>
</dbReference>
<dbReference type="HOGENOM" id="CLU_000604_1_22_2"/>
<dbReference type="InParanoid" id="Q58418"/>
<dbReference type="OrthoDB" id="31298at2157"/>
<dbReference type="PhylomeDB" id="Q58418"/>
<dbReference type="Proteomes" id="UP000000805">
    <property type="component" value="Chromosome"/>
</dbReference>
<dbReference type="GO" id="GO:0005886">
    <property type="term" value="C:plasma membrane"/>
    <property type="evidence" value="ECO:0007669"/>
    <property type="project" value="UniProtKB-SubCell"/>
</dbReference>
<dbReference type="GO" id="GO:0005524">
    <property type="term" value="F:ATP binding"/>
    <property type="evidence" value="ECO:0007669"/>
    <property type="project" value="UniProtKB-KW"/>
</dbReference>
<dbReference type="GO" id="GO:0016887">
    <property type="term" value="F:ATP hydrolysis activity"/>
    <property type="evidence" value="ECO:0007669"/>
    <property type="project" value="InterPro"/>
</dbReference>
<dbReference type="GO" id="GO:0015415">
    <property type="term" value="F:ATPase-coupled phosphate ion transmembrane transporter activity"/>
    <property type="evidence" value="ECO:0007669"/>
    <property type="project" value="UniProtKB-EC"/>
</dbReference>
<dbReference type="GO" id="GO:0035435">
    <property type="term" value="P:phosphate ion transmembrane transport"/>
    <property type="evidence" value="ECO:0007669"/>
    <property type="project" value="InterPro"/>
</dbReference>
<dbReference type="CDD" id="cd03260">
    <property type="entry name" value="ABC_PstB_phosphate_transporter"/>
    <property type="match status" value="1"/>
</dbReference>
<dbReference type="FunFam" id="3.40.50.300:FF:000132">
    <property type="entry name" value="Phosphate import ATP-binding protein PstB"/>
    <property type="match status" value="1"/>
</dbReference>
<dbReference type="Gene3D" id="3.40.50.300">
    <property type="entry name" value="P-loop containing nucleotide triphosphate hydrolases"/>
    <property type="match status" value="1"/>
</dbReference>
<dbReference type="InterPro" id="IPR003593">
    <property type="entry name" value="AAA+_ATPase"/>
</dbReference>
<dbReference type="InterPro" id="IPR003439">
    <property type="entry name" value="ABC_transporter-like_ATP-bd"/>
</dbReference>
<dbReference type="InterPro" id="IPR017871">
    <property type="entry name" value="ABC_transporter-like_CS"/>
</dbReference>
<dbReference type="InterPro" id="IPR027417">
    <property type="entry name" value="P-loop_NTPase"/>
</dbReference>
<dbReference type="InterPro" id="IPR005670">
    <property type="entry name" value="PstB-like"/>
</dbReference>
<dbReference type="NCBIfam" id="TIGR00972">
    <property type="entry name" value="3a0107s01c2"/>
    <property type="match status" value="1"/>
</dbReference>
<dbReference type="PANTHER" id="PTHR43423">
    <property type="entry name" value="ABC TRANSPORTER I FAMILY MEMBER 17"/>
    <property type="match status" value="1"/>
</dbReference>
<dbReference type="PANTHER" id="PTHR43423:SF1">
    <property type="entry name" value="ABC TRANSPORTER I FAMILY MEMBER 17"/>
    <property type="match status" value="1"/>
</dbReference>
<dbReference type="Pfam" id="PF00005">
    <property type="entry name" value="ABC_tran"/>
    <property type="match status" value="1"/>
</dbReference>
<dbReference type="SMART" id="SM00382">
    <property type="entry name" value="AAA"/>
    <property type="match status" value="1"/>
</dbReference>
<dbReference type="SUPFAM" id="SSF52540">
    <property type="entry name" value="P-loop containing nucleoside triphosphate hydrolases"/>
    <property type="match status" value="1"/>
</dbReference>
<dbReference type="PROSITE" id="PS00211">
    <property type="entry name" value="ABC_TRANSPORTER_1"/>
    <property type="match status" value="1"/>
</dbReference>
<dbReference type="PROSITE" id="PS50893">
    <property type="entry name" value="ABC_TRANSPORTER_2"/>
    <property type="match status" value="1"/>
</dbReference>
<dbReference type="PROSITE" id="PS51238">
    <property type="entry name" value="PSTB"/>
    <property type="match status" value="1"/>
</dbReference>
<keyword id="KW-0067">ATP-binding</keyword>
<keyword id="KW-1003">Cell membrane</keyword>
<keyword id="KW-0472">Membrane</keyword>
<keyword id="KW-0547">Nucleotide-binding</keyword>
<keyword id="KW-0592">Phosphate transport</keyword>
<keyword id="KW-1185">Reference proteome</keyword>
<keyword id="KW-1278">Translocase</keyword>
<keyword id="KW-0813">Transport</keyword>
<protein>
    <recommendedName>
        <fullName evidence="1">Phosphate import ATP-binding protein PstB</fullName>
        <ecNumber evidence="1">7.3.2.1</ecNumber>
    </recommendedName>
    <alternativeName>
        <fullName evidence="1">ABC phosphate transporter</fullName>
    </alternativeName>
    <alternativeName>
        <fullName evidence="1">Phosphate-transporting ATPase</fullName>
    </alternativeName>
</protein>
<evidence type="ECO:0000255" key="1">
    <source>
        <dbReference type="HAMAP-Rule" id="MF_01702"/>
    </source>
</evidence>